<feature type="chain" id="PRO_0000244110" description="Ribosome maturation factor RimM">
    <location>
        <begin position="1"/>
        <end position="171"/>
    </location>
</feature>
<feature type="domain" description="PRC barrel" evidence="1">
    <location>
        <begin position="94"/>
        <end position="168"/>
    </location>
</feature>
<name>RIMM_ANAPZ</name>
<accession>Q2GIL4</accession>
<organism>
    <name type="scientific">Anaplasma phagocytophilum (strain HZ)</name>
    <dbReference type="NCBI Taxonomy" id="212042"/>
    <lineage>
        <taxon>Bacteria</taxon>
        <taxon>Pseudomonadati</taxon>
        <taxon>Pseudomonadota</taxon>
        <taxon>Alphaproteobacteria</taxon>
        <taxon>Rickettsiales</taxon>
        <taxon>Anaplasmataceae</taxon>
        <taxon>Anaplasma</taxon>
        <taxon>phagocytophilum group</taxon>
    </lineage>
</organism>
<reference key="1">
    <citation type="journal article" date="2006" name="PLoS Genet.">
        <title>Comparative genomics of emerging human ehrlichiosis agents.</title>
        <authorList>
            <person name="Dunning Hotopp J.C."/>
            <person name="Lin M."/>
            <person name="Madupu R."/>
            <person name="Crabtree J."/>
            <person name="Angiuoli S.V."/>
            <person name="Eisen J.A."/>
            <person name="Seshadri R."/>
            <person name="Ren Q."/>
            <person name="Wu M."/>
            <person name="Utterback T.R."/>
            <person name="Smith S."/>
            <person name="Lewis M."/>
            <person name="Khouri H."/>
            <person name="Zhang C."/>
            <person name="Niu H."/>
            <person name="Lin Q."/>
            <person name="Ohashi N."/>
            <person name="Zhi N."/>
            <person name="Nelson W.C."/>
            <person name="Brinkac L.M."/>
            <person name="Dodson R.J."/>
            <person name="Rosovitz M.J."/>
            <person name="Sundaram J.P."/>
            <person name="Daugherty S.C."/>
            <person name="Davidsen T."/>
            <person name="Durkin A.S."/>
            <person name="Gwinn M.L."/>
            <person name="Haft D.H."/>
            <person name="Selengut J.D."/>
            <person name="Sullivan S.A."/>
            <person name="Zafar N."/>
            <person name="Zhou L."/>
            <person name="Benahmed F."/>
            <person name="Forberger H."/>
            <person name="Halpin R."/>
            <person name="Mulligan S."/>
            <person name="Robinson J."/>
            <person name="White O."/>
            <person name="Rikihisa Y."/>
            <person name="Tettelin H."/>
        </authorList>
    </citation>
    <scope>NUCLEOTIDE SEQUENCE [LARGE SCALE GENOMIC DNA]</scope>
    <source>
        <strain>HZ</strain>
    </source>
</reference>
<gene>
    <name evidence="1" type="primary">rimM</name>
    <name type="ordered locus">APH_1268</name>
</gene>
<sequence>MNIDDTFILLGVIYAAHGVRGCVKIKTFTHDPSDIAAYGPLTDGSESLKVSVMSVIKNGCVIAKISGIDDRCSAEALKNKKLYVSSSCLPKLKNDEFYKDELIGLSVKLPDDTIFGIVTEVFNFGSGDIVEISTPQGKKEMFSFTSNIFPSIDMKTREMTIVPPEIVGVYK</sequence>
<protein>
    <recommendedName>
        <fullName evidence="1">Ribosome maturation factor RimM</fullName>
    </recommendedName>
</protein>
<comment type="function">
    <text evidence="1">An accessory protein needed during the final step in the assembly of 30S ribosomal subunit, possibly for assembly of the head region. Essential for efficient processing of 16S rRNA. May be needed both before and after RbfA during the maturation of 16S rRNA. It has affinity for free ribosomal 30S subunits but not for 70S ribosomes.</text>
</comment>
<comment type="subunit">
    <text evidence="1">Binds ribosomal protein uS19.</text>
</comment>
<comment type="subcellular location">
    <subcellularLocation>
        <location evidence="1">Cytoplasm</location>
    </subcellularLocation>
</comment>
<comment type="domain">
    <text evidence="1">The PRC barrel domain binds ribosomal protein uS19.</text>
</comment>
<comment type="similarity">
    <text evidence="1">Belongs to the RimM family.</text>
</comment>
<dbReference type="EMBL" id="CP000235">
    <property type="protein sequence ID" value="ABD43386.1"/>
    <property type="molecule type" value="Genomic_DNA"/>
</dbReference>
<dbReference type="RefSeq" id="WP_011451294.1">
    <property type="nucleotide sequence ID" value="NC_007797.1"/>
</dbReference>
<dbReference type="SMR" id="Q2GIL4"/>
<dbReference type="STRING" id="212042.APH_1268"/>
<dbReference type="PaxDb" id="212042-APH_1268"/>
<dbReference type="EnsemblBacteria" id="ABD43386">
    <property type="protein sequence ID" value="ABD43386"/>
    <property type="gene ID" value="APH_1268"/>
</dbReference>
<dbReference type="GeneID" id="92747853"/>
<dbReference type="KEGG" id="aph:APH_1268"/>
<dbReference type="eggNOG" id="COG0806">
    <property type="taxonomic scope" value="Bacteria"/>
</dbReference>
<dbReference type="HOGENOM" id="CLU_077636_0_1_5"/>
<dbReference type="Proteomes" id="UP000001943">
    <property type="component" value="Chromosome"/>
</dbReference>
<dbReference type="GO" id="GO:0005737">
    <property type="term" value="C:cytoplasm"/>
    <property type="evidence" value="ECO:0007669"/>
    <property type="project" value="UniProtKB-SubCell"/>
</dbReference>
<dbReference type="GO" id="GO:0005840">
    <property type="term" value="C:ribosome"/>
    <property type="evidence" value="ECO:0007669"/>
    <property type="project" value="InterPro"/>
</dbReference>
<dbReference type="GO" id="GO:0043022">
    <property type="term" value="F:ribosome binding"/>
    <property type="evidence" value="ECO:0007669"/>
    <property type="project" value="InterPro"/>
</dbReference>
<dbReference type="GO" id="GO:0042274">
    <property type="term" value="P:ribosomal small subunit biogenesis"/>
    <property type="evidence" value="ECO:0007669"/>
    <property type="project" value="UniProtKB-UniRule"/>
</dbReference>
<dbReference type="GO" id="GO:0006364">
    <property type="term" value="P:rRNA processing"/>
    <property type="evidence" value="ECO:0007669"/>
    <property type="project" value="UniProtKB-UniRule"/>
</dbReference>
<dbReference type="Gene3D" id="2.30.30.240">
    <property type="entry name" value="PRC-barrel domain"/>
    <property type="match status" value="1"/>
</dbReference>
<dbReference type="Gene3D" id="2.40.30.60">
    <property type="entry name" value="RimM"/>
    <property type="match status" value="1"/>
</dbReference>
<dbReference type="HAMAP" id="MF_00014">
    <property type="entry name" value="Ribosome_mat_RimM"/>
    <property type="match status" value="1"/>
</dbReference>
<dbReference type="InterPro" id="IPR011033">
    <property type="entry name" value="PRC_barrel-like_sf"/>
</dbReference>
<dbReference type="InterPro" id="IPR056792">
    <property type="entry name" value="PRC_RimM"/>
</dbReference>
<dbReference type="InterPro" id="IPR011961">
    <property type="entry name" value="RimM"/>
</dbReference>
<dbReference type="InterPro" id="IPR002676">
    <property type="entry name" value="RimM_N"/>
</dbReference>
<dbReference type="InterPro" id="IPR036976">
    <property type="entry name" value="RimM_N_sf"/>
</dbReference>
<dbReference type="InterPro" id="IPR009000">
    <property type="entry name" value="Transl_B-barrel_sf"/>
</dbReference>
<dbReference type="NCBIfam" id="TIGR02273">
    <property type="entry name" value="16S_RimM"/>
    <property type="match status" value="1"/>
</dbReference>
<dbReference type="NCBIfam" id="NF011186">
    <property type="entry name" value="PRK14592.1"/>
    <property type="match status" value="1"/>
</dbReference>
<dbReference type="PANTHER" id="PTHR33692">
    <property type="entry name" value="RIBOSOME MATURATION FACTOR RIMM"/>
    <property type="match status" value="1"/>
</dbReference>
<dbReference type="PANTHER" id="PTHR33692:SF1">
    <property type="entry name" value="RIBOSOME MATURATION FACTOR RIMM"/>
    <property type="match status" value="1"/>
</dbReference>
<dbReference type="Pfam" id="PF24986">
    <property type="entry name" value="PRC_RimM"/>
    <property type="match status" value="1"/>
</dbReference>
<dbReference type="Pfam" id="PF01782">
    <property type="entry name" value="RimM"/>
    <property type="match status" value="1"/>
</dbReference>
<dbReference type="SUPFAM" id="SSF50346">
    <property type="entry name" value="PRC-barrel domain"/>
    <property type="match status" value="1"/>
</dbReference>
<dbReference type="SUPFAM" id="SSF50447">
    <property type="entry name" value="Translation proteins"/>
    <property type="match status" value="1"/>
</dbReference>
<keyword id="KW-0143">Chaperone</keyword>
<keyword id="KW-0963">Cytoplasm</keyword>
<keyword id="KW-0690">Ribosome biogenesis</keyword>
<keyword id="KW-0698">rRNA processing</keyword>
<proteinExistence type="inferred from homology"/>
<evidence type="ECO:0000255" key="1">
    <source>
        <dbReference type="HAMAP-Rule" id="MF_00014"/>
    </source>
</evidence>